<feature type="chain" id="PRO_0000243431" description="Large ribosomal subunit protein bL12">
    <location>
        <begin position="1"/>
        <end position="123"/>
    </location>
</feature>
<protein>
    <recommendedName>
        <fullName evidence="1">Large ribosomal subunit protein bL12</fullName>
    </recommendedName>
    <alternativeName>
        <fullName evidence="2">50S ribosomal protein L7/L12</fullName>
    </alternativeName>
</protein>
<gene>
    <name evidence="1" type="primary">rplL</name>
    <name type="ordered locus">NTHI0761</name>
</gene>
<proteinExistence type="inferred from homology"/>
<dbReference type="EMBL" id="CP000057">
    <property type="protein sequence ID" value="AAX87671.1"/>
    <property type="molecule type" value="Genomic_DNA"/>
</dbReference>
<dbReference type="RefSeq" id="WP_005650892.1">
    <property type="nucleotide sequence ID" value="NC_007146.2"/>
</dbReference>
<dbReference type="SMR" id="Q4QMS6"/>
<dbReference type="GeneID" id="93219636"/>
<dbReference type="KEGG" id="hit:NTHI0761"/>
<dbReference type="HOGENOM" id="CLU_086499_3_2_6"/>
<dbReference type="Proteomes" id="UP000002525">
    <property type="component" value="Chromosome"/>
</dbReference>
<dbReference type="GO" id="GO:0022625">
    <property type="term" value="C:cytosolic large ribosomal subunit"/>
    <property type="evidence" value="ECO:0007669"/>
    <property type="project" value="TreeGrafter"/>
</dbReference>
<dbReference type="GO" id="GO:0003729">
    <property type="term" value="F:mRNA binding"/>
    <property type="evidence" value="ECO:0007669"/>
    <property type="project" value="TreeGrafter"/>
</dbReference>
<dbReference type="GO" id="GO:0003735">
    <property type="term" value="F:structural constituent of ribosome"/>
    <property type="evidence" value="ECO:0007669"/>
    <property type="project" value="InterPro"/>
</dbReference>
<dbReference type="GO" id="GO:0006412">
    <property type="term" value="P:translation"/>
    <property type="evidence" value="ECO:0007669"/>
    <property type="project" value="UniProtKB-UniRule"/>
</dbReference>
<dbReference type="CDD" id="cd00387">
    <property type="entry name" value="Ribosomal_L7_L12"/>
    <property type="match status" value="1"/>
</dbReference>
<dbReference type="FunFam" id="1.20.5.710:FF:000003">
    <property type="entry name" value="50S ribosomal protein L7/L12"/>
    <property type="match status" value="1"/>
</dbReference>
<dbReference type="FunFam" id="3.30.1390.10:FF:000001">
    <property type="entry name" value="50S ribosomal protein L7/L12"/>
    <property type="match status" value="1"/>
</dbReference>
<dbReference type="Gene3D" id="3.30.1390.10">
    <property type="match status" value="1"/>
</dbReference>
<dbReference type="Gene3D" id="1.20.5.710">
    <property type="entry name" value="Single helix bin"/>
    <property type="match status" value="1"/>
</dbReference>
<dbReference type="HAMAP" id="MF_00368">
    <property type="entry name" value="Ribosomal_bL12"/>
    <property type="match status" value="1"/>
</dbReference>
<dbReference type="InterPro" id="IPR000206">
    <property type="entry name" value="Ribosomal_bL12"/>
</dbReference>
<dbReference type="InterPro" id="IPR013823">
    <property type="entry name" value="Ribosomal_bL12_C"/>
</dbReference>
<dbReference type="InterPro" id="IPR014719">
    <property type="entry name" value="Ribosomal_bL12_C/ClpS-like"/>
</dbReference>
<dbReference type="InterPro" id="IPR008932">
    <property type="entry name" value="Ribosomal_bL12_oligo"/>
</dbReference>
<dbReference type="InterPro" id="IPR036235">
    <property type="entry name" value="Ribosomal_bL12_oligo_N_sf"/>
</dbReference>
<dbReference type="NCBIfam" id="TIGR00855">
    <property type="entry name" value="L12"/>
    <property type="match status" value="1"/>
</dbReference>
<dbReference type="PANTHER" id="PTHR45987">
    <property type="entry name" value="39S RIBOSOMAL PROTEIN L12"/>
    <property type="match status" value="1"/>
</dbReference>
<dbReference type="PANTHER" id="PTHR45987:SF4">
    <property type="entry name" value="LARGE RIBOSOMAL SUBUNIT PROTEIN BL12M"/>
    <property type="match status" value="1"/>
</dbReference>
<dbReference type="Pfam" id="PF00542">
    <property type="entry name" value="Ribosomal_L12"/>
    <property type="match status" value="1"/>
</dbReference>
<dbReference type="Pfam" id="PF16320">
    <property type="entry name" value="Ribosomal_L12_N"/>
    <property type="match status" value="1"/>
</dbReference>
<dbReference type="SUPFAM" id="SSF54736">
    <property type="entry name" value="ClpS-like"/>
    <property type="match status" value="1"/>
</dbReference>
<dbReference type="SUPFAM" id="SSF48300">
    <property type="entry name" value="Ribosomal protein L7/12, oligomerisation (N-terminal) domain"/>
    <property type="match status" value="1"/>
</dbReference>
<reference key="1">
    <citation type="journal article" date="2005" name="J. Bacteriol.">
        <title>Genomic sequence of an otitis media isolate of nontypeable Haemophilus influenzae: comparative study with H. influenzae serotype d, strain KW20.</title>
        <authorList>
            <person name="Harrison A."/>
            <person name="Dyer D.W."/>
            <person name="Gillaspy A."/>
            <person name="Ray W.C."/>
            <person name="Mungur R."/>
            <person name="Carson M.B."/>
            <person name="Zhong H."/>
            <person name="Gipson J."/>
            <person name="Gipson M."/>
            <person name="Johnson L.S."/>
            <person name="Lewis L."/>
            <person name="Bakaletz L.O."/>
            <person name="Munson R.S. Jr."/>
        </authorList>
    </citation>
    <scope>NUCLEOTIDE SEQUENCE [LARGE SCALE GENOMIC DNA]</scope>
    <source>
        <strain>86-028NP</strain>
    </source>
</reference>
<comment type="function">
    <text evidence="1">Forms part of the ribosomal stalk which helps the ribosome interact with GTP-bound translation factors. Is thus essential for accurate translation.</text>
</comment>
<comment type="subunit">
    <text evidence="1">Homodimer. Part of the ribosomal stalk of the 50S ribosomal subunit. Forms a multimeric L10(L12)X complex, where L10 forms an elongated spine to which 2 to 4 L12 dimers bind in a sequential fashion. Binds GTP-bound translation factors.</text>
</comment>
<comment type="similarity">
    <text evidence="1">Belongs to the bacterial ribosomal protein bL12 family.</text>
</comment>
<keyword id="KW-0687">Ribonucleoprotein</keyword>
<keyword id="KW-0689">Ribosomal protein</keyword>
<sequence length="123" mass="12463">MSLTNEQIIEAIASKTVTEIVELIAAMEEKFGVSAAAAVAAAPAAGGAAAAEEKTEFDVVLKSAGANKVAVIKAVRGATGLGLKEAKDLVESAPANLKEGVSKEEAEALKKELEEAGAEVEVK</sequence>
<organism>
    <name type="scientific">Haemophilus influenzae (strain 86-028NP)</name>
    <dbReference type="NCBI Taxonomy" id="281310"/>
    <lineage>
        <taxon>Bacteria</taxon>
        <taxon>Pseudomonadati</taxon>
        <taxon>Pseudomonadota</taxon>
        <taxon>Gammaproteobacteria</taxon>
        <taxon>Pasteurellales</taxon>
        <taxon>Pasteurellaceae</taxon>
        <taxon>Haemophilus</taxon>
    </lineage>
</organism>
<name>RL7_HAEI8</name>
<evidence type="ECO:0000255" key="1">
    <source>
        <dbReference type="HAMAP-Rule" id="MF_00368"/>
    </source>
</evidence>
<evidence type="ECO:0000305" key="2"/>
<accession>Q4QMS6</accession>